<feature type="chain" id="PRO_1000119144" description="S-adenosylmethionine:tRNA ribosyltransferase-isomerase">
    <location>
        <begin position="1"/>
        <end position="363"/>
    </location>
</feature>
<protein>
    <recommendedName>
        <fullName evidence="1">S-adenosylmethionine:tRNA ribosyltransferase-isomerase</fullName>
        <ecNumber evidence="1">2.4.99.17</ecNumber>
    </recommendedName>
    <alternativeName>
        <fullName evidence="1">Queuosine biosynthesis protein QueA</fullName>
    </alternativeName>
</protein>
<gene>
    <name evidence="1" type="primary">queA</name>
    <name type="ordered locus">BMEA_A1137</name>
</gene>
<organism>
    <name type="scientific">Brucella melitensis biotype 2 (strain ATCC 23457)</name>
    <dbReference type="NCBI Taxonomy" id="546272"/>
    <lineage>
        <taxon>Bacteria</taxon>
        <taxon>Pseudomonadati</taxon>
        <taxon>Pseudomonadota</taxon>
        <taxon>Alphaproteobacteria</taxon>
        <taxon>Hyphomicrobiales</taxon>
        <taxon>Brucellaceae</taxon>
        <taxon>Brucella/Ochrobactrum group</taxon>
        <taxon>Brucella</taxon>
    </lineage>
</organism>
<sequence>MRVDLFDFDLPEERIALRPVEPRDHAKLLHVRPGEPFEDRHVYDLFDLLQPGDALVFNDTKVIPAQLEGMRERTGNISQVSATLHMRVGPDRWKAFLRPAKRVKEGDRIRFGHSGTSCFLGTLDATVAEKGDSGEALLVFDLSGAVLDEAIAAVGHIPLPPYIASKRPEDERDRKDYQTVYAREEGAVAAPTAGLHFTPDLLEKIKARGIEEHFVTLHVGAGTFLPVKADDTGDHKMHAEIGHVSQRTASALNAVHERGGRIICVGTTSLRLIESATGEDGVVRPWSGATDIFITPGYRFRAVDLLMTNFHLPRSTLFMLVSAFSGLDTMHAAYNYAIADGYRFYSYGDASLLERIDHDRHSA</sequence>
<reference key="1">
    <citation type="submission" date="2009-03" db="EMBL/GenBank/DDBJ databases">
        <title>Brucella melitensis ATCC 23457 whole genome shotgun sequencing project.</title>
        <authorList>
            <person name="Setubal J.C."/>
            <person name="Boyle S."/>
            <person name="Crasta O.R."/>
            <person name="Gillespie J.J."/>
            <person name="Kenyon R.W."/>
            <person name="Lu J."/>
            <person name="Mane S."/>
            <person name="Nagrani S."/>
            <person name="Shallom J.M."/>
            <person name="Shallom S."/>
            <person name="Shukla M."/>
            <person name="Snyder E.E."/>
            <person name="Sobral B.W."/>
            <person name="Wattam A.R."/>
            <person name="Will R."/>
            <person name="Williams K."/>
            <person name="Yoo H."/>
            <person name="Munk C."/>
            <person name="Tapia R."/>
            <person name="Han C."/>
            <person name="Detter J.C."/>
            <person name="Bruce D."/>
            <person name="Brettin T.S."/>
        </authorList>
    </citation>
    <scope>NUCLEOTIDE SEQUENCE [LARGE SCALE GENOMIC DNA]</scope>
    <source>
        <strain>ATCC 23457</strain>
    </source>
</reference>
<dbReference type="EC" id="2.4.99.17" evidence="1"/>
<dbReference type="EMBL" id="CP001488">
    <property type="protein sequence ID" value="ACO00873.1"/>
    <property type="molecule type" value="Genomic_DNA"/>
</dbReference>
<dbReference type="RefSeq" id="WP_004686429.1">
    <property type="nucleotide sequence ID" value="NC_012441.1"/>
</dbReference>
<dbReference type="SMR" id="C0RJ65"/>
<dbReference type="KEGG" id="bmi:BMEA_A1137"/>
<dbReference type="HOGENOM" id="CLU_039110_1_1_5"/>
<dbReference type="UniPathway" id="UPA00392"/>
<dbReference type="Proteomes" id="UP000001748">
    <property type="component" value="Chromosome I"/>
</dbReference>
<dbReference type="GO" id="GO:0005737">
    <property type="term" value="C:cytoplasm"/>
    <property type="evidence" value="ECO:0007669"/>
    <property type="project" value="UniProtKB-SubCell"/>
</dbReference>
<dbReference type="GO" id="GO:0051075">
    <property type="term" value="F:S-adenosylmethionine:tRNA ribosyltransferase-isomerase activity"/>
    <property type="evidence" value="ECO:0007669"/>
    <property type="project" value="UniProtKB-EC"/>
</dbReference>
<dbReference type="GO" id="GO:0008616">
    <property type="term" value="P:queuosine biosynthetic process"/>
    <property type="evidence" value="ECO:0007669"/>
    <property type="project" value="UniProtKB-UniRule"/>
</dbReference>
<dbReference type="GO" id="GO:0002099">
    <property type="term" value="P:tRNA wobble guanine modification"/>
    <property type="evidence" value="ECO:0007669"/>
    <property type="project" value="TreeGrafter"/>
</dbReference>
<dbReference type="FunFam" id="3.40.1780.10:FF:000001">
    <property type="entry name" value="S-adenosylmethionine:tRNA ribosyltransferase-isomerase"/>
    <property type="match status" value="1"/>
</dbReference>
<dbReference type="Gene3D" id="2.40.10.240">
    <property type="entry name" value="QueA-like"/>
    <property type="match status" value="1"/>
</dbReference>
<dbReference type="Gene3D" id="3.40.1780.10">
    <property type="entry name" value="QueA-like"/>
    <property type="match status" value="1"/>
</dbReference>
<dbReference type="HAMAP" id="MF_00113">
    <property type="entry name" value="QueA"/>
    <property type="match status" value="1"/>
</dbReference>
<dbReference type="InterPro" id="IPR003699">
    <property type="entry name" value="QueA"/>
</dbReference>
<dbReference type="InterPro" id="IPR042118">
    <property type="entry name" value="QueA_dom1"/>
</dbReference>
<dbReference type="InterPro" id="IPR042119">
    <property type="entry name" value="QueA_dom2"/>
</dbReference>
<dbReference type="InterPro" id="IPR036100">
    <property type="entry name" value="QueA_sf"/>
</dbReference>
<dbReference type="NCBIfam" id="NF001140">
    <property type="entry name" value="PRK00147.1"/>
    <property type="match status" value="1"/>
</dbReference>
<dbReference type="NCBIfam" id="TIGR00113">
    <property type="entry name" value="queA"/>
    <property type="match status" value="1"/>
</dbReference>
<dbReference type="PANTHER" id="PTHR30307">
    <property type="entry name" value="S-ADENOSYLMETHIONINE:TRNA RIBOSYLTRANSFERASE-ISOMERASE"/>
    <property type="match status" value="1"/>
</dbReference>
<dbReference type="PANTHER" id="PTHR30307:SF0">
    <property type="entry name" value="S-ADENOSYLMETHIONINE:TRNA RIBOSYLTRANSFERASE-ISOMERASE"/>
    <property type="match status" value="1"/>
</dbReference>
<dbReference type="Pfam" id="PF02547">
    <property type="entry name" value="Queuosine_synth"/>
    <property type="match status" value="1"/>
</dbReference>
<dbReference type="SUPFAM" id="SSF111337">
    <property type="entry name" value="QueA-like"/>
    <property type="match status" value="1"/>
</dbReference>
<proteinExistence type="inferred from homology"/>
<accession>C0RJ65</accession>
<keyword id="KW-0963">Cytoplasm</keyword>
<keyword id="KW-0671">Queuosine biosynthesis</keyword>
<keyword id="KW-0949">S-adenosyl-L-methionine</keyword>
<keyword id="KW-0808">Transferase</keyword>
<comment type="function">
    <text evidence="1">Transfers and isomerizes the ribose moiety from AdoMet to the 7-aminomethyl group of 7-deazaguanine (preQ1-tRNA) to give epoxyqueuosine (oQ-tRNA).</text>
</comment>
<comment type="catalytic activity">
    <reaction evidence="1">
        <text>7-aminomethyl-7-carbaguanosine(34) in tRNA + S-adenosyl-L-methionine = epoxyqueuosine(34) in tRNA + adenine + L-methionine + 2 H(+)</text>
        <dbReference type="Rhea" id="RHEA:32155"/>
        <dbReference type="Rhea" id="RHEA-COMP:10342"/>
        <dbReference type="Rhea" id="RHEA-COMP:18582"/>
        <dbReference type="ChEBI" id="CHEBI:15378"/>
        <dbReference type="ChEBI" id="CHEBI:16708"/>
        <dbReference type="ChEBI" id="CHEBI:57844"/>
        <dbReference type="ChEBI" id="CHEBI:59789"/>
        <dbReference type="ChEBI" id="CHEBI:82833"/>
        <dbReference type="ChEBI" id="CHEBI:194443"/>
        <dbReference type="EC" id="2.4.99.17"/>
    </reaction>
</comment>
<comment type="pathway">
    <text evidence="1">tRNA modification; tRNA-queuosine biosynthesis.</text>
</comment>
<comment type="subunit">
    <text evidence="1">Monomer.</text>
</comment>
<comment type="subcellular location">
    <subcellularLocation>
        <location evidence="1">Cytoplasm</location>
    </subcellularLocation>
</comment>
<comment type="similarity">
    <text evidence="1">Belongs to the QueA family.</text>
</comment>
<evidence type="ECO:0000255" key="1">
    <source>
        <dbReference type="HAMAP-Rule" id="MF_00113"/>
    </source>
</evidence>
<name>QUEA_BRUMB</name>